<keyword id="KW-0067">ATP-binding</keyword>
<keyword id="KW-0963">Cytoplasm</keyword>
<keyword id="KW-0418">Kinase</keyword>
<keyword id="KW-0472">Membrane</keyword>
<keyword id="KW-0547">Nucleotide-binding</keyword>
<keyword id="KW-1185">Reference proteome</keyword>
<keyword id="KW-0727">SH2 domain</keyword>
<keyword id="KW-0728">SH3 domain</keyword>
<keyword id="KW-0808">Transferase</keyword>
<keyword id="KW-0829">Tyrosine-protein kinase</keyword>
<name>MATK_RAT</name>
<sequence>MPTQRWAPGTQCMTKCENSRPKPGELAFRKGDMVTILEACEDKSWYRAKHHSSGQEGLLAAAALRQREALSTDPKLSLMPWFHGKISGQEAIQQLQPPEDGLFLVRESARHPGDYVLCVSFGRDVIHYRVLHRDGHLTIDEAVCFCNLMDMVEHYTRDKGAICTKLVKPKRKQGAKSAEEELAKAGWLLDLQHLTLGAQIGEGEFGAVLQGEYLGQKVAVKNIKCDVTAQAFLDETAVMTKLQHRNLVRLLGVILHHGLYIVMEHVSKGNLVNFLRTRGRALVSTSQLLQFALHVAEGMEYLESKKLVHRDLAARNILVSEDLVAKVSDFGLAKAELRKGLDSSRLPVKWTAPEALKNGRFSSKSDVWSFGVLLWEVFSYGRAPYPKMSLKEVSEAVEKGYRMEPPDSCPGPVHTLMGSCWEAEPSRRPPFRKIVEKLGRELRSVGVAAPAGGQEAEGSAPTRSQDP</sequence>
<comment type="function">
    <text>Could play a significant role in the signal transduction of hematopoietic cells. May regulate tyrosine kinase activity of SRC-family members in brain.</text>
</comment>
<comment type="catalytic activity">
    <reaction evidence="5">
        <text>L-tyrosyl-[protein] + ATP = O-phospho-L-tyrosyl-[protein] + ADP + H(+)</text>
        <dbReference type="Rhea" id="RHEA:10596"/>
        <dbReference type="Rhea" id="RHEA-COMP:10136"/>
        <dbReference type="Rhea" id="RHEA-COMP:20101"/>
        <dbReference type="ChEBI" id="CHEBI:15378"/>
        <dbReference type="ChEBI" id="CHEBI:30616"/>
        <dbReference type="ChEBI" id="CHEBI:46858"/>
        <dbReference type="ChEBI" id="CHEBI:61978"/>
        <dbReference type="ChEBI" id="CHEBI:456216"/>
        <dbReference type="EC" id="2.7.10.2"/>
    </reaction>
</comment>
<comment type="subunit">
    <text evidence="1">Interacts with KIT.</text>
</comment>
<comment type="subcellular location">
    <subcellularLocation>
        <location evidence="1">Cytoplasm</location>
    </subcellularLocation>
    <subcellularLocation>
        <location evidence="1">Membrane</location>
    </subcellularLocation>
    <text evidence="1">In platelets, 90% of MATK localizes to the membrane fraction, and translocates to the cytoskeleton upon thrombin stimulation.</text>
</comment>
<comment type="tissue specificity">
    <text>Enriched in lymphoid tissues.</text>
</comment>
<comment type="similarity">
    <text evidence="2">Belongs to the protein kinase superfamily. Tyr protein kinase family. CSK subfamily.</text>
</comment>
<protein>
    <recommendedName>
        <fullName>Megakaryocyte-associated tyrosine-protein kinase</fullName>
        <ecNumber>2.7.10.2</ecNumber>
    </recommendedName>
    <alternativeName>
        <fullName>Protein kinase BATK</fullName>
    </alternativeName>
    <alternativeName>
        <fullName>Tyrosine-protein kinase CTK</fullName>
    </alternativeName>
</protein>
<feature type="chain" id="PRO_0000088075" description="Megakaryocyte-associated tyrosine-protein kinase">
    <location>
        <begin position="1"/>
        <end position="467"/>
    </location>
</feature>
<feature type="domain" description="SH3" evidence="4">
    <location>
        <begin position="7"/>
        <end position="69"/>
    </location>
</feature>
<feature type="domain" description="SH2" evidence="3">
    <location>
        <begin position="81"/>
        <end position="170"/>
    </location>
</feature>
<feature type="domain" description="Protein kinase" evidence="2">
    <location>
        <begin position="194"/>
        <end position="443"/>
    </location>
</feature>
<feature type="region of interest" description="Disordered" evidence="6">
    <location>
        <begin position="1"/>
        <end position="20"/>
    </location>
</feature>
<feature type="region of interest" description="Disordered" evidence="6">
    <location>
        <begin position="445"/>
        <end position="467"/>
    </location>
</feature>
<feature type="active site" description="Proton acceptor" evidence="2 5">
    <location>
        <position position="311"/>
    </location>
</feature>
<feature type="binding site" evidence="2">
    <location>
        <begin position="200"/>
        <end position="208"/>
    </location>
    <ligand>
        <name>ATP</name>
        <dbReference type="ChEBI" id="CHEBI:30616"/>
    </ligand>
</feature>
<feature type="binding site" evidence="2">
    <location>
        <position position="221"/>
    </location>
    <ligand>
        <name>ATP</name>
        <dbReference type="ChEBI" id="CHEBI:30616"/>
    </ligand>
</feature>
<reference key="1">
    <citation type="journal article" date="1994" name="J. Neurosci. Res.">
        <title>Identification and characterization of Batk, a predominantly brain-specific non-receptor protein tyrosine kinase related to Csk.</title>
        <authorList>
            <person name="Kuo S.S."/>
            <person name="Moran P."/>
            <person name="Gripp J."/>
            <person name="Armanini M."/>
            <person name="Phillips H.S."/>
            <person name="Goddard A."/>
            <person name="Caras I.W."/>
        </authorList>
    </citation>
    <scope>NUCLEOTIDE SEQUENCE [GENOMIC DNA]</scope>
    <source>
        <strain>Sprague-Dawley</strain>
        <tissue>Hippocampus</tissue>
    </source>
</reference>
<reference key="2">
    <citation type="journal article" date="2004" name="Genome Res.">
        <title>The status, quality, and expansion of the NIH full-length cDNA project: the Mammalian Gene Collection (MGC).</title>
        <authorList>
            <consortium name="The MGC Project Team"/>
        </authorList>
    </citation>
    <scope>NUCLEOTIDE SEQUENCE [LARGE SCALE MRNA]</scope>
    <source>
        <tissue>Brain</tissue>
    </source>
</reference>
<gene>
    <name type="primary">Matk</name>
    <name type="synonym">Batk</name>
    <name type="synonym">Ctk</name>
</gene>
<dbReference type="EC" id="2.7.10.2"/>
<dbReference type="EMBL" id="L34542">
    <property type="protein sequence ID" value="AAA64524.1"/>
    <property type="molecule type" value="Genomic_DNA"/>
</dbReference>
<dbReference type="EMBL" id="BC087726">
    <property type="protein sequence ID" value="AAH87726.1"/>
    <property type="molecule type" value="mRNA"/>
</dbReference>
<dbReference type="PIR" id="I56579">
    <property type="entry name" value="I56579"/>
</dbReference>
<dbReference type="RefSeq" id="NP_068631.1">
    <property type="nucleotide sequence ID" value="NM_021859.2"/>
</dbReference>
<dbReference type="RefSeq" id="XP_006241051.1">
    <property type="nucleotide sequence ID" value="XM_006240989.3"/>
</dbReference>
<dbReference type="RefSeq" id="XP_006241052.1">
    <property type="nucleotide sequence ID" value="XM_006240990.3"/>
</dbReference>
<dbReference type="RefSeq" id="XP_008763350.1">
    <property type="nucleotide sequence ID" value="XM_008765128.2"/>
</dbReference>
<dbReference type="RefSeq" id="XP_063120269.1">
    <property type="nucleotide sequence ID" value="XM_063264199.1"/>
</dbReference>
<dbReference type="RefSeq" id="XP_063120270.1">
    <property type="nucleotide sequence ID" value="XM_063264200.1"/>
</dbReference>
<dbReference type="BMRB" id="P41243"/>
<dbReference type="SMR" id="P41243"/>
<dbReference type="BioGRID" id="248843">
    <property type="interactions" value="2"/>
</dbReference>
<dbReference type="FunCoup" id="P41243">
    <property type="interactions" value="54"/>
</dbReference>
<dbReference type="IntAct" id="P41243">
    <property type="interactions" value="1"/>
</dbReference>
<dbReference type="STRING" id="10116.ENSRNOP00000027730"/>
<dbReference type="iPTMnet" id="P41243"/>
<dbReference type="PhosphoSitePlus" id="P41243"/>
<dbReference type="PaxDb" id="10116-ENSRNOP00000027730"/>
<dbReference type="Ensembl" id="ENSRNOT00000027730.5">
    <property type="protein sequence ID" value="ENSRNOP00000027730.4"/>
    <property type="gene ID" value="ENSRNOG00000020431.6"/>
</dbReference>
<dbReference type="GeneID" id="60450"/>
<dbReference type="KEGG" id="rno:60450"/>
<dbReference type="UCSC" id="RGD:69058">
    <property type="organism name" value="rat"/>
</dbReference>
<dbReference type="AGR" id="RGD:69058"/>
<dbReference type="CTD" id="4145"/>
<dbReference type="RGD" id="69058">
    <property type="gene designation" value="Matk"/>
</dbReference>
<dbReference type="eggNOG" id="KOG0197">
    <property type="taxonomic scope" value="Eukaryota"/>
</dbReference>
<dbReference type="GeneTree" id="ENSGT00940000160775"/>
<dbReference type="HOGENOM" id="CLU_000288_7_2_1"/>
<dbReference type="InParanoid" id="P41243"/>
<dbReference type="PhylomeDB" id="P41243"/>
<dbReference type="BRENDA" id="2.7.10.2">
    <property type="organism ID" value="5301"/>
</dbReference>
<dbReference type="Reactome" id="R-RNO-8863795">
    <property type="pathway name" value="Downregulation of ERBB2 signaling"/>
</dbReference>
<dbReference type="PRO" id="PR:P41243"/>
<dbReference type="Proteomes" id="UP000002494">
    <property type="component" value="Chromosome 7"/>
</dbReference>
<dbReference type="Bgee" id="ENSRNOG00000020431">
    <property type="expression patterns" value="Expressed in frontal cortex and 20 other cell types or tissues"/>
</dbReference>
<dbReference type="GO" id="GO:0005737">
    <property type="term" value="C:cytoplasm"/>
    <property type="evidence" value="ECO:0007669"/>
    <property type="project" value="UniProtKB-SubCell"/>
</dbReference>
<dbReference type="GO" id="GO:0005886">
    <property type="term" value="C:plasma membrane"/>
    <property type="evidence" value="ECO:0000318"/>
    <property type="project" value="GO_Central"/>
</dbReference>
<dbReference type="GO" id="GO:0005524">
    <property type="term" value="F:ATP binding"/>
    <property type="evidence" value="ECO:0007669"/>
    <property type="project" value="UniProtKB-KW"/>
</dbReference>
<dbReference type="GO" id="GO:0004715">
    <property type="term" value="F:non-membrane spanning protein tyrosine kinase activity"/>
    <property type="evidence" value="ECO:0000318"/>
    <property type="project" value="GO_Central"/>
</dbReference>
<dbReference type="CDD" id="cd09937">
    <property type="entry name" value="SH2_csk_like"/>
    <property type="match status" value="1"/>
</dbReference>
<dbReference type="FunFam" id="1.10.510.10:FF:000376">
    <property type="entry name" value="Tyrosine-protein kinase"/>
    <property type="match status" value="1"/>
</dbReference>
<dbReference type="FunFam" id="2.30.30.40:FF:000145">
    <property type="entry name" value="Tyrosine-protein kinase"/>
    <property type="match status" value="1"/>
</dbReference>
<dbReference type="FunFam" id="3.30.200.20:FF:000053">
    <property type="entry name" value="Tyrosine-protein kinase"/>
    <property type="match status" value="1"/>
</dbReference>
<dbReference type="FunFam" id="3.30.505.10:FF:000023">
    <property type="entry name" value="Tyrosine-protein kinase"/>
    <property type="match status" value="1"/>
</dbReference>
<dbReference type="Gene3D" id="3.30.505.10">
    <property type="entry name" value="SH2 domain"/>
    <property type="match status" value="1"/>
</dbReference>
<dbReference type="Gene3D" id="2.30.30.40">
    <property type="entry name" value="SH3 Domains"/>
    <property type="match status" value="1"/>
</dbReference>
<dbReference type="Gene3D" id="1.10.510.10">
    <property type="entry name" value="Transferase(Phosphotransferase) domain 1"/>
    <property type="match status" value="1"/>
</dbReference>
<dbReference type="InterPro" id="IPR035027">
    <property type="entry name" value="Csk-like_SH2"/>
</dbReference>
<dbReference type="InterPro" id="IPR011009">
    <property type="entry name" value="Kinase-like_dom_sf"/>
</dbReference>
<dbReference type="InterPro" id="IPR050198">
    <property type="entry name" value="Non-receptor_tyrosine_kinases"/>
</dbReference>
<dbReference type="InterPro" id="IPR000719">
    <property type="entry name" value="Prot_kinase_dom"/>
</dbReference>
<dbReference type="InterPro" id="IPR017441">
    <property type="entry name" value="Protein_kinase_ATP_BS"/>
</dbReference>
<dbReference type="InterPro" id="IPR001245">
    <property type="entry name" value="Ser-Thr/Tyr_kinase_cat_dom"/>
</dbReference>
<dbReference type="InterPro" id="IPR000980">
    <property type="entry name" value="SH2"/>
</dbReference>
<dbReference type="InterPro" id="IPR036860">
    <property type="entry name" value="SH2_dom_sf"/>
</dbReference>
<dbReference type="InterPro" id="IPR036028">
    <property type="entry name" value="SH3-like_dom_sf"/>
</dbReference>
<dbReference type="InterPro" id="IPR001452">
    <property type="entry name" value="SH3_domain"/>
</dbReference>
<dbReference type="InterPro" id="IPR008266">
    <property type="entry name" value="Tyr_kinase_AS"/>
</dbReference>
<dbReference type="InterPro" id="IPR020635">
    <property type="entry name" value="Tyr_kinase_cat_dom"/>
</dbReference>
<dbReference type="PANTHER" id="PTHR24418">
    <property type="entry name" value="TYROSINE-PROTEIN KINASE"/>
    <property type="match status" value="1"/>
</dbReference>
<dbReference type="Pfam" id="PF07714">
    <property type="entry name" value="PK_Tyr_Ser-Thr"/>
    <property type="match status" value="1"/>
</dbReference>
<dbReference type="Pfam" id="PF00017">
    <property type="entry name" value="SH2"/>
    <property type="match status" value="1"/>
</dbReference>
<dbReference type="Pfam" id="PF00018">
    <property type="entry name" value="SH3_1"/>
    <property type="match status" value="1"/>
</dbReference>
<dbReference type="PRINTS" id="PR00401">
    <property type="entry name" value="SH2DOMAIN"/>
</dbReference>
<dbReference type="PRINTS" id="PR00109">
    <property type="entry name" value="TYRKINASE"/>
</dbReference>
<dbReference type="SMART" id="SM00252">
    <property type="entry name" value="SH2"/>
    <property type="match status" value="1"/>
</dbReference>
<dbReference type="SMART" id="SM00326">
    <property type="entry name" value="SH3"/>
    <property type="match status" value="1"/>
</dbReference>
<dbReference type="SMART" id="SM00219">
    <property type="entry name" value="TyrKc"/>
    <property type="match status" value="1"/>
</dbReference>
<dbReference type="SUPFAM" id="SSF56112">
    <property type="entry name" value="Protein kinase-like (PK-like)"/>
    <property type="match status" value="1"/>
</dbReference>
<dbReference type="SUPFAM" id="SSF55550">
    <property type="entry name" value="SH2 domain"/>
    <property type="match status" value="1"/>
</dbReference>
<dbReference type="SUPFAM" id="SSF50044">
    <property type="entry name" value="SH3-domain"/>
    <property type="match status" value="1"/>
</dbReference>
<dbReference type="PROSITE" id="PS00107">
    <property type="entry name" value="PROTEIN_KINASE_ATP"/>
    <property type="match status" value="1"/>
</dbReference>
<dbReference type="PROSITE" id="PS50011">
    <property type="entry name" value="PROTEIN_KINASE_DOM"/>
    <property type="match status" value="1"/>
</dbReference>
<dbReference type="PROSITE" id="PS00109">
    <property type="entry name" value="PROTEIN_KINASE_TYR"/>
    <property type="match status" value="1"/>
</dbReference>
<dbReference type="PROSITE" id="PS50001">
    <property type="entry name" value="SH2"/>
    <property type="match status" value="1"/>
</dbReference>
<dbReference type="PROSITE" id="PS50002">
    <property type="entry name" value="SH3"/>
    <property type="match status" value="1"/>
</dbReference>
<evidence type="ECO:0000250" key="1"/>
<evidence type="ECO:0000255" key="2">
    <source>
        <dbReference type="PROSITE-ProRule" id="PRU00159"/>
    </source>
</evidence>
<evidence type="ECO:0000255" key="3">
    <source>
        <dbReference type="PROSITE-ProRule" id="PRU00191"/>
    </source>
</evidence>
<evidence type="ECO:0000255" key="4">
    <source>
        <dbReference type="PROSITE-ProRule" id="PRU00192"/>
    </source>
</evidence>
<evidence type="ECO:0000255" key="5">
    <source>
        <dbReference type="PROSITE-ProRule" id="PRU10028"/>
    </source>
</evidence>
<evidence type="ECO:0000256" key="6">
    <source>
        <dbReference type="SAM" id="MobiDB-lite"/>
    </source>
</evidence>
<proteinExistence type="evidence at transcript level"/>
<organism>
    <name type="scientific">Rattus norvegicus</name>
    <name type="common">Rat</name>
    <dbReference type="NCBI Taxonomy" id="10116"/>
    <lineage>
        <taxon>Eukaryota</taxon>
        <taxon>Metazoa</taxon>
        <taxon>Chordata</taxon>
        <taxon>Craniata</taxon>
        <taxon>Vertebrata</taxon>
        <taxon>Euteleostomi</taxon>
        <taxon>Mammalia</taxon>
        <taxon>Eutheria</taxon>
        <taxon>Euarchontoglires</taxon>
        <taxon>Glires</taxon>
        <taxon>Rodentia</taxon>
        <taxon>Myomorpha</taxon>
        <taxon>Muroidea</taxon>
        <taxon>Muridae</taxon>
        <taxon>Murinae</taxon>
        <taxon>Rattus</taxon>
    </lineage>
</organism>
<accession>P41243</accession>